<comment type="function">
    <text evidence="1">Catalyzes the NADPH-dependent reduction of glutamyl-tRNA(Glu) to glutamate 1-semialdehyde (GSA).</text>
</comment>
<comment type="catalytic activity">
    <reaction evidence="1">
        <text>(S)-4-amino-5-oxopentanoate + tRNA(Glu) + NADP(+) = L-glutamyl-tRNA(Glu) + NADPH + H(+)</text>
        <dbReference type="Rhea" id="RHEA:12344"/>
        <dbReference type="Rhea" id="RHEA-COMP:9663"/>
        <dbReference type="Rhea" id="RHEA-COMP:9680"/>
        <dbReference type="ChEBI" id="CHEBI:15378"/>
        <dbReference type="ChEBI" id="CHEBI:57501"/>
        <dbReference type="ChEBI" id="CHEBI:57783"/>
        <dbReference type="ChEBI" id="CHEBI:58349"/>
        <dbReference type="ChEBI" id="CHEBI:78442"/>
        <dbReference type="ChEBI" id="CHEBI:78520"/>
        <dbReference type="EC" id="1.2.1.70"/>
    </reaction>
</comment>
<comment type="pathway">
    <text evidence="1">Porphyrin-containing compound metabolism; protoporphyrin-IX biosynthesis; 5-aminolevulinate from L-glutamyl-tRNA(Glu): step 1/2.</text>
</comment>
<comment type="subunit">
    <text evidence="1">Homodimer.</text>
</comment>
<comment type="domain">
    <text evidence="1">Possesses an unusual extended V-shaped dimeric structure with each monomer consisting of three distinct domains arranged along a curved 'spinal' alpha-helix. The N-terminal catalytic domain specifically recognizes the glutamate moiety of the substrate. The second domain is the NADPH-binding domain, and the third C-terminal domain is responsible for dimerization.</text>
</comment>
<comment type="miscellaneous">
    <text evidence="1">During catalysis, the active site Cys acts as a nucleophile attacking the alpha-carbonyl group of tRNA-bound glutamate with the formation of a thioester intermediate between enzyme and glutamate, and the concomitant release of tRNA(Glu). The thioester intermediate is finally reduced by direct hydride transfer from NADPH, to form the product GSA.</text>
</comment>
<comment type="similarity">
    <text evidence="1">Belongs to the glutamyl-tRNA reductase family.</text>
</comment>
<name>HEM1_XYLFA</name>
<gene>
    <name evidence="1" type="primary">hemA</name>
    <name type="ordered locus">XF_2648</name>
</gene>
<accession>Q9PA72</accession>
<evidence type="ECO:0000255" key="1">
    <source>
        <dbReference type="HAMAP-Rule" id="MF_00087"/>
    </source>
</evidence>
<evidence type="ECO:0000256" key="2">
    <source>
        <dbReference type="SAM" id="MobiDB-lite"/>
    </source>
</evidence>
<keyword id="KW-0521">NADP</keyword>
<keyword id="KW-0560">Oxidoreductase</keyword>
<keyword id="KW-0627">Porphyrin biosynthesis</keyword>
<protein>
    <recommendedName>
        <fullName evidence="1">Glutamyl-tRNA reductase</fullName>
        <shortName evidence="1">GluTR</shortName>
        <ecNumber evidence="1">1.2.1.70</ecNumber>
    </recommendedName>
</protein>
<dbReference type="EC" id="1.2.1.70" evidence="1"/>
<dbReference type="EMBL" id="AE003849">
    <property type="protein sequence ID" value="AAF85445.1"/>
    <property type="molecule type" value="Genomic_DNA"/>
</dbReference>
<dbReference type="PIR" id="A82533">
    <property type="entry name" value="A82533"/>
</dbReference>
<dbReference type="RefSeq" id="WP_010895062.1">
    <property type="nucleotide sequence ID" value="NC_002488.3"/>
</dbReference>
<dbReference type="SMR" id="Q9PA72"/>
<dbReference type="STRING" id="160492.XF_2648"/>
<dbReference type="KEGG" id="xfa:XF_2648"/>
<dbReference type="eggNOG" id="COG0373">
    <property type="taxonomic scope" value="Bacteria"/>
</dbReference>
<dbReference type="HOGENOM" id="CLU_035113_2_2_6"/>
<dbReference type="UniPathway" id="UPA00251">
    <property type="reaction ID" value="UER00316"/>
</dbReference>
<dbReference type="Proteomes" id="UP000000812">
    <property type="component" value="Chromosome"/>
</dbReference>
<dbReference type="GO" id="GO:0008883">
    <property type="term" value="F:glutamyl-tRNA reductase activity"/>
    <property type="evidence" value="ECO:0007669"/>
    <property type="project" value="UniProtKB-UniRule"/>
</dbReference>
<dbReference type="GO" id="GO:0050661">
    <property type="term" value="F:NADP binding"/>
    <property type="evidence" value="ECO:0007669"/>
    <property type="project" value="InterPro"/>
</dbReference>
<dbReference type="GO" id="GO:0019353">
    <property type="term" value="P:protoporphyrinogen IX biosynthetic process from glutamate"/>
    <property type="evidence" value="ECO:0007669"/>
    <property type="project" value="TreeGrafter"/>
</dbReference>
<dbReference type="CDD" id="cd05213">
    <property type="entry name" value="NAD_bind_Glutamyl_tRNA_reduct"/>
    <property type="match status" value="1"/>
</dbReference>
<dbReference type="FunFam" id="3.30.460.30:FF:000001">
    <property type="entry name" value="Glutamyl-tRNA reductase"/>
    <property type="match status" value="1"/>
</dbReference>
<dbReference type="FunFam" id="3.40.50.720:FF:000031">
    <property type="entry name" value="Glutamyl-tRNA reductase"/>
    <property type="match status" value="1"/>
</dbReference>
<dbReference type="Gene3D" id="3.30.460.30">
    <property type="entry name" value="Glutamyl-tRNA reductase, N-terminal domain"/>
    <property type="match status" value="1"/>
</dbReference>
<dbReference type="Gene3D" id="3.40.50.720">
    <property type="entry name" value="NAD(P)-binding Rossmann-like Domain"/>
    <property type="match status" value="1"/>
</dbReference>
<dbReference type="HAMAP" id="MF_00087">
    <property type="entry name" value="Glu_tRNA_reductase"/>
    <property type="match status" value="1"/>
</dbReference>
<dbReference type="InterPro" id="IPR000343">
    <property type="entry name" value="4pyrrol_synth_GluRdtase"/>
</dbReference>
<dbReference type="InterPro" id="IPR015896">
    <property type="entry name" value="4pyrrol_synth_GluRdtase_dimer"/>
</dbReference>
<dbReference type="InterPro" id="IPR015895">
    <property type="entry name" value="4pyrrol_synth_GluRdtase_N"/>
</dbReference>
<dbReference type="InterPro" id="IPR018214">
    <property type="entry name" value="GluRdtase_CS"/>
</dbReference>
<dbReference type="InterPro" id="IPR036453">
    <property type="entry name" value="GluRdtase_dimer_dom_sf"/>
</dbReference>
<dbReference type="InterPro" id="IPR036343">
    <property type="entry name" value="GluRdtase_N_sf"/>
</dbReference>
<dbReference type="InterPro" id="IPR036291">
    <property type="entry name" value="NAD(P)-bd_dom_sf"/>
</dbReference>
<dbReference type="InterPro" id="IPR006151">
    <property type="entry name" value="Shikm_DH/Glu-tRNA_Rdtase"/>
</dbReference>
<dbReference type="NCBIfam" id="TIGR01035">
    <property type="entry name" value="hemA"/>
    <property type="match status" value="1"/>
</dbReference>
<dbReference type="PANTHER" id="PTHR43013">
    <property type="entry name" value="GLUTAMYL-TRNA REDUCTASE"/>
    <property type="match status" value="1"/>
</dbReference>
<dbReference type="PANTHER" id="PTHR43013:SF1">
    <property type="entry name" value="GLUTAMYL-TRNA REDUCTASE"/>
    <property type="match status" value="1"/>
</dbReference>
<dbReference type="Pfam" id="PF00745">
    <property type="entry name" value="GlutR_dimer"/>
    <property type="match status" value="1"/>
</dbReference>
<dbReference type="Pfam" id="PF05201">
    <property type="entry name" value="GlutR_N"/>
    <property type="match status" value="1"/>
</dbReference>
<dbReference type="Pfam" id="PF01488">
    <property type="entry name" value="Shikimate_DH"/>
    <property type="match status" value="1"/>
</dbReference>
<dbReference type="PIRSF" id="PIRSF000445">
    <property type="entry name" value="4pyrrol_synth_GluRdtase"/>
    <property type="match status" value="1"/>
</dbReference>
<dbReference type="SUPFAM" id="SSF69742">
    <property type="entry name" value="Glutamyl tRNA-reductase catalytic, N-terminal domain"/>
    <property type="match status" value="1"/>
</dbReference>
<dbReference type="SUPFAM" id="SSF69075">
    <property type="entry name" value="Glutamyl tRNA-reductase dimerization domain"/>
    <property type="match status" value="1"/>
</dbReference>
<dbReference type="SUPFAM" id="SSF51735">
    <property type="entry name" value="NAD(P)-binding Rossmann-fold domains"/>
    <property type="match status" value="1"/>
</dbReference>
<dbReference type="PROSITE" id="PS00747">
    <property type="entry name" value="GLUTR"/>
    <property type="match status" value="1"/>
</dbReference>
<sequence>MTLWVLGLNHQTAPMELRERASFVGDALPRALDSLRNLPNVNEAALLSTCNRTELYAETTNAQILLNWLEQHRPGLQNHLYQYRDAAAVRHLFRVATGLDSMVLGESQILGQVKDSWSMARTHGTLGNTLDRLFQHGFSVAKHARTNTRIGANPVSIASTAVRLAQDAFSPLNESTVLLIGTGETIQLAAKHLSEGRVQRLLIANRTHAKAQMLASQHGGYALPLTELNLHLAEADIIFSATAAPTPIVTQSNVESALHIRKRKPMLLFDLAIPRDIETEVGTLTDAYLYTIDDLERAVEENRRSRREAAETAEAIIELQVKRYMDTLQAHAHQAPLRRLRTFGTTTRDELLTRARQQLANGRPAEEVLEQLAHGLTNRLLHPPTAALREAALANNTELVRAAEQLFPEKPGYHHPTLQTTIVKTDETDPAS</sequence>
<proteinExistence type="inferred from homology"/>
<reference key="1">
    <citation type="journal article" date="2000" name="Nature">
        <title>The genome sequence of the plant pathogen Xylella fastidiosa.</title>
        <authorList>
            <person name="Simpson A.J.G."/>
            <person name="Reinach F.C."/>
            <person name="Arruda P."/>
            <person name="Abreu F.A."/>
            <person name="Acencio M."/>
            <person name="Alvarenga R."/>
            <person name="Alves L.M.C."/>
            <person name="Araya J.E."/>
            <person name="Baia G.S."/>
            <person name="Baptista C.S."/>
            <person name="Barros M.H."/>
            <person name="Bonaccorsi E.D."/>
            <person name="Bordin S."/>
            <person name="Bove J.M."/>
            <person name="Briones M.R.S."/>
            <person name="Bueno M.R.P."/>
            <person name="Camargo A.A."/>
            <person name="Camargo L.E.A."/>
            <person name="Carraro D.M."/>
            <person name="Carrer H."/>
            <person name="Colauto N.B."/>
            <person name="Colombo C."/>
            <person name="Costa F.F."/>
            <person name="Costa M.C.R."/>
            <person name="Costa-Neto C.M."/>
            <person name="Coutinho L.L."/>
            <person name="Cristofani M."/>
            <person name="Dias-Neto E."/>
            <person name="Docena C."/>
            <person name="El-Dorry H."/>
            <person name="Facincani A.P."/>
            <person name="Ferreira A.J.S."/>
            <person name="Ferreira V.C.A."/>
            <person name="Ferro J.A."/>
            <person name="Fraga J.S."/>
            <person name="Franca S.C."/>
            <person name="Franco M.C."/>
            <person name="Frohme M."/>
            <person name="Furlan L.R."/>
            <person name="Garnier M."/>
            <person name="Goldman G.H."/>
            <person name="Goldman M.H.S."/>
            <person name="Gomes S.L."/>
            <person name="Gruber A."/>
            <person name="Ho P.L."/>
            <person name="Hoheisel J.D."/>
            <person name="Junqueira M.L."/>
            <person name="Kemper E.L."/>
            <person name="Kitajima J.P."/>
            <person name="Krieger J.E."/>
            <person name="Kuramae E.E."/>
            <person name="Laigret F."/>
            <person name="Lambais M.R."/>
            <person name="Leite L.C.C."/>
            <person name="Lemos E.G.M."/>
            <person name="Lemos M.V.F."/>
            <person name="Lopes S.A."/>
            <person name="Lopes C.R."/>
            <person name="Machado J.A."/>
            <person name="Machado M.A."/>
            <person name="Madeira A.M.B.N."/>
            <person name="Madeira H.M.F."/>
            <person name="Marino C.L."/>
            <person name="Marques M.V."/>
            <person name="Martins E.A.L."/>
            <person name="Martins E.M.F."/>
            <person name="Matsukuma A.Y."/>
            <person name="Menck C.F.M."/>
            <person name="Miracca E.C."/>
            <person name="Miyaki C.Y."/>
            <person name="Monteiro-Vitorello C.B."/>
            <person name="Moon D.H."/>
            <person name="Nagai M.A."/>
            <person name="Nascimento A.L.T.O."/>
            <person name="Netto L.E.S."/>
            <person name="Nhani A. Jr."/>
            <person name="Nobrega F.G."/>
            <person name="Nunes L.R."/>
            <person name="Oliveira M.A."/>
            <person name="de Oliveira M.C."/>
            <person name="de Oliveira R.C."/>
            <person name="Palmieri D.A."/>
            <person name="Paris A."/>
            <person name="Peixoto B.R."/>
            <person name="Pereira G.A.G."/>
            <person name="Pereira H.A. Jr."/>
            <person name="Pesquero J.B."/>
            <person name="Quaggio R.B."/>
            <person name="Roberto P.G."/>
            <person name="Rodrigues V."/>
            <person name="de Rosa A.J.M."/>
            <person name="de Rosa V.E. Jr."/>
            <person name="de Sa R.G."/>
            <person name="Santelli R.V."/>
            <person name="Sawasaki H.E."/>
            <person name="da Silva A.C.R."/>
            <person name="da Silva A.M."/>
            <person name="da Silva F.R."/>
            <person name="Silva W.A. Jr."/>
            <person name="da Silveira J.F."/>
            <person name="Silvestri M.L.Z."/>
            <person name="Siqueira W.J."/>
            <person name="de Souza A.A."/>
            <person name="de Souza A.P."/>
            <person name="Terenzi M.F."/>
            <person name="Truffi D."/>
            <person name="Tsai S.M."/>
            <person name="Tsuhako M.H."/>
            <person name="Vallada H."/>
            <person name="Van Sluys M.A."/>
            <person name="Verjovski-Almeida S."/>
            <person name="Vettore A.L."/>
            <person name="Zago M.A."/>
            <person name="Zatz M."/>
            <person name="Meidanis J."/>
            <person name="Setubal J.C."/>
        </authorList>
    </citation>
    <scope>NUCLEOTIDE SEQUENCE [LARGE SCALE GENOMIC DNA]</scope>
    <source>
        <strain>9a5c</strain>
    </source>
</reference>
<organism>
    <name type="scientific">Xylella fastidiosa (strain 9a5c)</name>
    <dbReference type="NCBI Taxonomy" id="160492"/>
    <lineage>
        <taxon>Bacteria</taxon>
        <taxon>Pseudomonadati</taxon>
        <taxon>Pseudomonadota</taxon>
        <taxon>Gammaproteobacteria</taxon>
        <taxon>Lysobacterales</taxon>
        <taxon>Lysobacteraceae</taxon>
        <taxon>Xylella</taxon>
    </lineage>
</organism>
<feature type="chain" id="PRO_0000114092" description="Glutamyl-tRNA reductase">
    <location>
        <begin position="1"/>
        <end position="432"/>
    </location>
</feature>
<feature type="region of interest" description="Disordered" evidence="2">
    <location>
        <begin position="410"/>
        <end position="432"/>
    </location>
</feature>
<feature type="active site" description="Nucleophile" evidence="1">
    <location>
        <position position="50"/>
    </location>
</feature>
<feature type="binding site" evidence="1">
    <location>
        <begin position="49"/>
        <end position="52"/>
    </location>
    <ligand>
        <name>substrate</name>
    </ligand>
</feature>
<feature type="binding site" evidence="1">
    <location>
        <position position="101"/>
    </location>
    <ligand>
        <name>substrate</name>
    </ligand>
</feature>
<feature type="binding site" evidence="1">
    <location>
        <begin position="106"/>
        <end position="108"/>
    </location>
    <ligand>
        <name>substrate</name>
    </ligand>
</feature>
<feature type="binding site" evidence="1">
    <location>
        <position position="112"/>
    </location>
    <ligand>
        <name>substrate</name>
    </ligand>
</feature>
<feature type="binding site" evidence="1">
    <location>
        <begin position="181"/>
        <end position="186"/>
    </location>
    <ligand>
        <name>NADP(+)</name>
        <dbReference type="ChEBI" id="CHEBI:58349"/>
    </ligand>
</feature>
<feature type="site" description="Important for activity" evidence="1">
    <location>
        <position position="91"/>
    </location>
</feature>